<keyword id="KW-0119">Carbohydrate metabolism</keyword>
<keyword id="KW-0378">Hydrolase</keyword>
<keyword id="KW-0464">Manganese</keyword>
<keyword id="KW-0614">Plasmid</keyword>
<keyword id="KW-1185">Reference proteome</keyword>
<organism>
    <name type="scientific">Ligilactobacillus salivarius (strain UCC118)</name>
    <name type="common">Lactobacillus salivarius</name>
    <dbReference type="NCBI Taxonomy" id="362948"/>
    <lineage>
        <taxon>Bacteria</taxon>
        <taxon>Bacillati</taxon>
        <taxon>Bacillota</taxon>
        <taxon>Bacilli</taxon>
        <taxon>Lactobacillales</taxon>
        <taxon>Lactobacillaceae</taxon>
        <taxon>Ligilactobacillus</taxon>
    </lineage>
</organism>
<dbReference type="EC" id="3.1.3.11" evidence="1"/>
<dbReference type="EMBL" id="CP000234">
    <property type="protein sequence ID" value="ABE00708.1"/>
    <property type="status" value="ALT_INIT"/>
    <property type="molecule type" value="Genomic_DNA"/>
</dbReference>
<dbReference type="RefSeq" id="WP_003702983.1">
    <property type="nucleotide sequence ID" value="NC_007930.1"/>
</dbReference>
<dbReference type="RefSeq" id="YP_536791.1">
    <property type="nucleotide sequence ID" value="NC_007930.1"/>
</dbReference>
<dbReference type="KEGG" id="lsl:LSL_1903"/>
<dbReference type="PATRIC" id="fig|362948.14.peg.2029"/>
<dbReference type="HOGENOM" id="CLU_028392_2_0_9"/>
<dbReference type="OrthoDB" id="9779903at2"/>
<dbReference type="UniPathway" id="UPA00138"/>
<dbReference type="Proteomes" id="UP000006559">
    <property type="component" value="Plasmid pMP118"/>
</dbReference>
<dbReference type="GO" id="GO:0042132">
    <property type="term" value="F:fructose 1,6-bisphosphate 1-phosphatase activity"/>
    <property type="evidence" value="ECO:0007669"/>
    <property type="project" value="UniProtKB-UniRule"/>
</dbReference>
<dbReference type="GO" id="GO:0006094">
    <property type="term" value="P:gluconeogenesis"/>
    <property type="evidence" value="ECO:0007669"/>
    <property type="project" value="UniProtKB-UniRule"/>
</dbReference>
<dbReference type="Gene3D" id="3.60.21.10">
    <property type="match status" value="1"/>
</dbReference>
<dbReference type="HAMAP" id="MF_01854">
    <property type="entry name" value="FBPase_class3"/>
    <property type="match status" value="1"/>
</dbReference>
<dbReference type="InterPro" id="IPR009164">
    <property type="entry name" value="FBPtase_class3"/>
</dbReference>
<dbReference type="InterPro" id="IPR029052">
    <property type="entry name" value="Metallo-depent_PP-like"/>
</dbReference>
<dbReference type="Pfam" id="PF06874">
    <property type="entry name" value="FBPase_2"/>
    <property type="match status" value="1"/>
</dbReference>
<dbReference type="PIRSF" id="PIRSF000906">
    <property type="entry name" value="FBPtase_Bacill"/>
    <property type="match status" value="1"/>
</dbReference>
<dbReference type="SUPFAM" id="SSF56300">
    <property type="entry name" value="Metallo-dependent phosphatases"/>
    <property type="match status" value="1"/>
</dbReference>
<gene>
    <name evidence="1" type="primary">fbp</name>
    <name type="ordered locus">LSL_1903</name>
</gene>
<sequence length="641" mass="74546">MNAYSHNLLKEKYPTKQDVITEIMNLEAILHLPKGTEHFVSDLHGEYTAFDHVLRNGSGSIKQKIQDYFSDRMTEQTMQDFALLIYYPEDELALVKKKLRTENELQQWYLDNISHLLEFLELSGSKYTRSKVRKALNPNFVYITEELLYNDPQEFNKRSYINQLLKNILKLDQADKFIIATCYTIQRLVVDHLHVLGDVYDRGEEPDKIMDRLMNYHSVDMQWGNHDLLWLGAMAGSKLCMLNLLRICARYNNLNIIEDAYGINLRHLSRFAEEQYEDNPQFRPKLTNGDGYRFNGEKLQITQIHQAVAMMQFKLEGQVIARRPELKMDDRDLLNKIDYKKNVINLNGKEYSLQNTCFNTVDPKNPNELTDEENAIVDELLISIQHSTKLKRHLDFMMNKGSMYRTYNGNLLFHGCIPADEEGNFCSLKIGSKEYSGKKLFDFSEKMIRKAYSKPNVKDDFATDFMWYLWQGALSPLFGKKSMTTFERYFIADKACHEEVKNPYYKLRENKDFCIKILQEFGFAGDDTNHIINGHTPVKRGHNAICAEGYMLVIDGGYSKAYQPTTGIAGYTLLYNSYGLQLVSHQPFTSKQDAIRSGKDIVSTVRVVKHELQRKSVADTDIGENIKEKIRVLYNLLRNYD</sequence>
<proteinExistence type="inferred from homology"/>
<comment type="catalytic activity">
    <reaction evidence="1">
        <text>beta-D-fructose 1,6-bisphosphate + H2O = beta-D-fructose 6-phosphate + phosphate</text>
        <dbReference type="Rhea" id="RHEA:11064"/>
        <dbReference type="ChEBI" id="CHEBI:15377"/>
        <dbReference type="ChEBI" id="CHEBI:32966"/>
        <dbReference type="ChEBI" id="CHEBI:43474"/>
        <dbReference type="ChEBI" id="CHEBI:57634"/>
        <dbReference type="EC" id="3.1.3.11"/>
    </reaction>
</comment>
<comment type="cofactor">
    <cofactor evidence="1">
        <name>Mn(2+)</name>
        <dbReference type="ChEBI" id="CHEBI:29035"/>
    </cofactor>
</comment>
<comment type="pathway">
    <text evidence="1">Carbohydrate biosynthesis; gluconeogenesis.</text>
</comment>
<comment type="similarity">
    <text evidence="1">Belongs to the FBPase class 3 family.</text>
</comment>
<comment type="sequence caution" evidence="2">
    <conflict type="erroneous initiation">
        <sequence resource="EMBL-CDS" id="ABE00708"/>
    </conflict>
</comment>
<feature type="chain" id="PRO_0000363097" description="Fructose-1,6-bisphosphatase class 3">
    <location>
        <begin position="1"/>
        <end position="641"/>
    </location>
</feature>
<evidence type="ECO:0000255" key="1">
    <source>
        <dbReference type="HAMAP-Rule" id="MF_01854"/>
    </source>
</evidence>
<evidence type="ECO:0000305" key="2"/>
<geneLocation type="plasmid">
    <name>pMP118</name>
</geneLocation>
<name>F16PC_LIGS1</name>
<protein>
    <recommendedName>
        <fullName evidence="1">Fructose-1,6-bisphosphatase class 3</fullName>
        <shortName evidence="1">FBPase class 3</shortName>
        <ecNumber evidence="1">3.1.3.11</ecNumber>
    </recommendedName>
    <alternativeName>
        <fullName evidence="1">D-fructose-1,6-bisphosphate 1-phosphohydrolase class 3</fullName>
    </alternativeName>
</protein>
<reference key="1">
    <citation type="journal article" date="2006" name="Proc. Natl. Acad. Sci. U.S.A.">
        <title>Multireplicon genome architecture of Lactobacillus salivarius.</title>
        <authorList>
            <person name="Claesson M.J."/>
            <person name="Li Y."/>
            <person name="Leahy S."/>
            <person name="Canchaya C."/>
            <person name="van Pijkeren J.P."/>
            <person name="Cerdeno-Tarraga A.M."/>
            <person name="Parkhill J."/>
            <person name="Flynn S."/>
            <person name="O'Sullivan G.C."/>
            <person name="Collins J.K."/>
            <person name="Higgins D."/>
            <person name="Shanahan F."/>
            <person name="Fitzgerald G.F."/>
            <person name="van Sinderen D."/>
            <person name="O'Toole P.W."/>
        </authorList>
    </citation>
    <scope>NUCLEOTIDE SEQUENCE [LARGE SCALE GENOMIC DNA]</scope>
    <source>
        <strain>UCC118</strain>
    </source>
</reference>
<accession>Q1WQZ0</accession>